<dbReference type="EC" id="1.4.4.2" evidence="1"/>
<dbReference type="EMBL" id="BA000004">
    <property type="protein sequence ID" value="BAB06534.1"/>
    <property type="molecule type" value="Genomic_DNA"/>
</dbReference>
<dbReference type="PIR" id="G84001">
    <property type="entry name" value="G84001"/>
</dbReference>
<dbReference type="RefSeq" id="WP_010898963.1">
    <property type="nucleotide sequence ID" value="NC_002570.2"/>
</dbReference>
<dbReference type="SMR" id="Q9K935"/>
<dbReference type="STRING" id="272558.gene:10728715"/>
<dbReference type="KEGG" id="bha:BH2815"/>
<dbReference type="eggNOG" id="COG0403">
    <property type="taxonomic scope" value="Bacteria"/>
</dbReference>
<dbReference type="HOGENOM" id="CLU_004620_0_2_9"/>
<dbReference type="OrthoDB" id="9771867at2"/>
<dbReference type="Proteomes" id="UP000001258">
    <property type="component" value="Chromosome"/>
</dbReference>
<dbReference type="GO" id="GO:0004375">
    <property type="term" value="F:glycine dehydrogenase (decarboxylating) activity"/>
    <property type="evidence" value="ECO:0007669"/>
    <property type="project" value="UniProtKB-EC"/>
</dbReference>
<dbReference type="GO" id="GO:0019464">
    <property type="term" value="P:glycine decarboxylation via glycine cleavage system"/>
    <property type="evidence" value="ECO:0007669"/>
    <property type="project" value="UniProtKB-UniRule"/>
</dbReference>
<dbReference type="GO" id="GO:0009116">
    <property type="term" value="P:nucleoside metabolic process"/>
    <property type="evidence" value="ECO:0007669"/>
    <property type="project" value="InterPro"/>
</dbReference>
<dbReference type="CDD" id="cd00613">
    <property type="entry name" value="GDC-P"/>
    <property type="match status" value="1"/>
</dbReference>
<dbReference type="Gene3D" id="3.90.1150.10">
    <property type="entry name" value="Aspartate Aminotransferase, domain 1"/>
    <property type="match status" value="1"/>
</dbReference>
<dbReference type="Gene3D" id="3.40.640.10">
    <property type="entry name" value="Type I PLP-dependent aspartate aminotransferase-like (Major domain)"/>
    <property type="match status" value="1"/>
</dbReference>
<dbReference type="HAMAP" id="MF_00712">
    <property type="entry name" value="GcvPA"/>
    <property type="match status" value="1"/>
</dbReference>
<dbReference type="InterPro" id="IPR023010">
    <property type="entry name" value="GcvPA"/>
</dbReference>
<dbReference type="InterPro" id="IPR049315">
    <property type="entry name" value="GDC-P_N"/>
</dbReference>
<dbReference type="InterPro" id="IPR020581">
    <property type="entry name" value="GDC_P"/>
</dbReference>
<dbReference type="InterPro" id="IPR015424">
    <property type="entry name" value="PyrdxlP-dep_Trfase"/>
</dbReference>
<dbReference type="InterPro" id="IPR015421">
    <property type="entry name" value="PyrdxlP-dep_Trfase_major"/>
</dbReference>
<dbReference type="InterPro" id="IPR015422">
    <property type="entry name" value="PyrdxlP-dep_Trfase_small"/>
</dbReference>
<dbReference type="NCBIfam" id="NF001696">
    <property type="entry name" value="PRK00451.1"/>
    <property type="match status" value="1"/>
</dbReference>
<dbReference type="PANTHER" id="PTHR42806">
    <property type="entry name" value="GLYCINE CLEAVAGE SYSTEM P-PROTEIN"/>
    <property type="match status" value="1"/>
</dbReference>
<dbReference type="PANTHER" id="PTHR42806:SF1">
    <property type="entry name" value="GLYCINE DEHYDROGENASE (DECARBOXYLATING)"/>
    <property type="match status" value="1"/>
</dbReference>
<dbReference type="Pfam" id="PF02347">
    <property type="entry name" value="GDC-P"/>
    <property type="match status" value="1"/>
</dbReference>
<dbReference type="PIRSF" id="PIRSF006815">
    <property type="entry name" value="GcvPA"/>
    <property type="match status" value="1"/>
</dbReference>
<dbReference type="SUPFAM" id="SSF53383">
    <property type="entry name" value="PLP-dependent transferases"/>
    <property type="match status" value="1"/>
</dbReference>
<keyword id="KW-0560">Oxidoreductase</keyword>
<keyword id="KW-1185">Reference proteome</keyword>
<proteinExistence type="inferred from homology"/>
<gene>
    <name evidence="1" type="primary">gcvPA</name>
    <name type="ordered locus">BH2815</name>
</gene>
<feature type="chain" id="PRO_0000166958" description="Probable glycine dehydrogenase (decarboxylating) subunit 1">
    <location>
        <begin position="1"/>
        <end position="447"/>
    </location>
</feature>
<sequence>MNHRYLPMTTDDRQEMLQAIGVDSIEELFSDIPQDIRFKGKLNIPNALKEPELIRYFQQLANENVHLKDKASFLGAGVYDHYIPSIVDHVISRSEFYTAYTPYQPEISQGELQAIFEFQTMICELTGMEVANSSMYDGPTALAEAAMMSCGHTKKKKILVSKAVHPEARDVLMTNAYGQRLEVVEIDTNNGVTDVEHLKALYDEETACVIVQHPNFFGRLEPLAEIESVSHQGKATFVVSSNPLALGLLKPPGAFGADVVVGDAQPFGIPTQYGGPHCGYFATTKKLMRKVPGRLVGQTTDDQGQRGFVLTLQAREQHIRREKATSNICSNQALNALAAAVAMATIGKRGVKEMALQNVQKAAYAKSQLKANGVEIVAEGPCFNEFIIKLSSPLHEVEEALLAKGFIAGYDLGKVYPELEGHMLVAVTEVRTKEEIDQFAKEVGMFA</sequence>
<accession>Q9K935</accession>
<reference key="1">
    <citation type="journal article" date="2000" name="Nucleic Acids Res.">
        <title>Complete genome sequence of the alkaliphilic bacterium Bacillus halodurans and genomic sequence comparison with Bacillus subtilis.</title>
        <authorList>
            <person name="Takami H."/>
            <person name="Nakasone K."/>
            <person name="Takaki Y."/>
            <person name="Maeno G."/>
            <person name="Sasaki R."/>
            <person name="Masui N."/>
            <person name="Fuji F."/>
            <person name="Hirama C."/>
            <person name="Nakamura Y."/>
            <person name="Ogasawara N."/>
            <person name="Kuhara S."/>
            <person name="Horikoshi K."/>
        </authorList>
    </citation>
    <scope>NUCLEOTIDE SEQUENCE [LARGE SCALE GENOMIC DNA]</scope>
    <source>
        <strain>ATCC BAA-125 / DSM 18197 / FERM 7344 / JCM 9153 / C-125</strain>
    </source>
</reference>
<name>GCSPA_HALH5</name>
<organism>
    <name type="scientific">Halalkalibacterium halodurans (strain ATCC BAA-125 / DSM 18197 / FERM 7344 / JCM 9153 / C-125)</name>
    <name type="common">Bacillus halodurans</name>
    <dbReference type="NCBI Taxonomy" id="272558"/>
    <lineage>
        <taxon>Bacteria</taxon>
        <taxon>Bacillati</taxon>
        <taxon>Bacillota</taxon>
        <taxon>Bacilli</taxon>
        <taxon>Bacillales</taxon>
        <taxon>Bacillaceae</taxon>
        <taxon>Halalkalibacterium (ex Joshi et al. 2022)</taxon>
    </lineage>
</organism>
<protein>
    <recommendedName>
        <fullName evidence="1">Probable glycine dehydrogenase (decarboxylating) subunit 1</fullName>
        <ecNumber evidence="1">1.4.4.2</ecNumber>
    </recommendedName>
    <alternativeName>
        <fullName evidence="1">Glycine cleavage system P-protein subunit 1</fullName>
    </alternativeName>
    <alternativeName>
        <fullName evidence="1">Glycine decarboxylase subunit 1</fullName>
    </alternativeName>
    <alternativeName>
        <fullName evidence="1">Glycine dehydrogenase (aminomethyl-transferring) subunit 1</fullName>
    </alternativeName>
</protein>
<comment type="function">
    <text evidence="1">The glycine cleavage system catalyzes the degradation of glycine. The P protein binds the alpha-amino group of glycine through its pyridoxal phosphate cofactor; CO(2) is released and the remaining methylamine moiety is then transferred to the lipoamide cofactor of the H protein.</text>
</comment>
<comment type="catalytic activity">
    <reaction evidence="1">
        <text>N(6)-[(R)-lipoyl]-L-lysyl-[glycine-cleavage complex H protein] + glycine + H(+) = N(6)-[(R)-S(8)-aminomethyldihydrolipoyl]-L-lysyl-[glycine-cleavage complex H protein] + CO2</text>
        <dbReference type="Rhea" id="RHEA:24304"/>
        <dbReference type="Rhea" id="RHEA-COMP:10494"/>
        <dbReference type="Rhea" id="RHEA-COMP:10495"/>
        <dbReference type="ChEBI" id="CHEBI:15378"/>
        <dbReference type="ChEBI" id="CHEBI:16526"/>
        <dbReference type="ChEBI" id="CHEBI:57305"/>
        <dbReference type="ChEBI" id="CHEBI:83099"/>
        <dbReference type="ChEBI" id="CHEBI:83143"/>
        <dbReference type="EC" id="1.4.4.2"/>
    </reaction>
</comment>
<comment type="subunit">
    <text evidence="1">The glycine cleavage system is composed of four proteins: P, T, L and H. In this organism, the P 'protein' is a heterodimer of two subunits.</text>
</comment>
<comment type="similarity">
    <text evidence="1">Belongs to the GcvP family. N-terminal subunit subfamily.</text>
</comment>
<evidence type="ECO:0000255" key="1">
    <source>
        <dbReference type="HAMAP-Rule" id="MF_00712"/>
    </source>
</evidence>